<accession>Q89QW7</accession>
<protein>
    <recommendedName>
        <fullName evidence="1">4-hydroxy-3-methylbut-2-enyl diphosphate reductase 2</fullName>
        <shortName evidence="1">HMBPP reductase 2</shortName>
        <ecNumber evidence="1">1.17.7.4</ecNumber>
    </recommendedName>
</protein>
<organism>
    <name type="scientific">Bradyrhizobium diazoefficiens (strain JCM 10833 / BCRC 13528 / IAM 13628 / NBRC 14792 / USDA 110)</name>
    <dbReference type="NCBI Taxonomy" id="224911"/>
    <lineage>
        <taxon>Bacteria</taxon>
        <taxon>Pseudomonadati</taxon>
        <taxon>Pseudomonadota</taxon>
        <taxon>Alphaproteobacteria</taxon>
        <taxon>Hyphomicrobiales</taxon>
        <taxon>Nitrobacteraceae</taxon>
        <taxon>Bradyrhizobium</taxon>
    </lineage>
</organism>
<reference key="1">
    <citation type="journal article" date="2002" name="DNA Res.">
        <title>Complete genomic sequence of nitrogen-fixing symbiotic bacterium Bradyrhizobium japonicum USDA110.</title>
        <authorList>
            <person name="Kaneko T."/>
            <person name="Nakamura Y."/>
            <person name="Sato S."/>
            <person name="Minamisawa K."/>
            <person name="Uchiumi T."/>
            <person name="Sasamoto S."/>
            <person name="Watanabe A."/>
            <person name="Idesawa K."/>
            <person name="Iriguchi M."/>
            <person name="Kawashima K."/>
            <person name="Kohara M."/>
            <person name="Matsumoto M."/>
            <person name="Shimpo S."/>
            <person name="Tsuruoka H."/>
            <person name="Wada T."/>
            <person name="Yamada M."/>
            <person name="Tabata S."/>
        </authorList>
    </citation>
    <scope>NUCLEOTIDE SEQUENCE [LARGE SCALE GENOMIC DNA]</scope>
    <source>
        <strain>JCM 10833 / BCRC 13528 / IAM 13628 / NBRC 14792 / USDA 110</strain>
    </source>
</reference>
<evidence type="ECO:0000255" key="1">
    <source>
        <dbReference type="HAMAP-Rule" id="MF_00191"/>
    </source>
</evidence>
<name>ISPH2_BRADU</name>
<gene>
    <name evidence="1" type="primary">ispH2</name>
    <name type="ordered locus">bll3007</name>
</gene>
<comment type="function">
    <text evidence="1">Catalyzes the conversion of 1-hydroxy-2-methyl-2-(E)-butenyl 4-diphosphate (HMBPP) into a mixture of isopentenyl diphosphate (IPP) and dimethylallyl diphosphate (DMAPP). Acts in the terminal step of the DOXP/MEP pathway for isoprenoid precursor biosynthesis.</text>
</comment>
<comment type="catalytic activity">
    <reaction evidence="1">
        <text>isopentenyl diphosphate + 2 oxidized [2Fe-2S]-[ferredoxin] + H2O = (2E)-4-hydroxy-3-methylbut-2-enyl diphosphate + 2 reduced [2Fe-2S]-[ferredoxin] + 2 H(+)</text>
        <dbReference type="Rhea" id="RHEA:24488"/>
        <dbReference type="Rhea" id="RHEA-COMP:10000"/>
        <dbReference type="Rhea" id="RHEA-COMP:10001"/>
        <dbReference type="ChEBI" id="CHEBI:15377"/>
        <dbReference type="ChEBI" id="CHEBI:15378"/>
        <dbReference type="ChEBI" id="CHEBI:33737"/>
        <dbReference type="ChEBI" id="CHEBI:33738"/>
        <dbReference type="ChEBI" id="CHEBI:128753"/>
        <dbReference type="ChEBI" id="CHEBI:128769"/>
        <dbReference type="EC" id="1.17.7.4"/>
    </reaction>
</comment>
<comment type="catalytic activity">
    <reaction evidence="1">
        <text>dimethylallyl diphosphate + 2 oxidized [2Fe-2S]-[ferredoxin] + H2O = (2E)-4-hydroxy-3-methylbut-2-enyl diphosphate + 2 reduced [2Fe-2S]-[ferredoxin] + 2 H(+)</text>
        <dbReference type="Rhea" id="RHEA:24825"/>
        <dbReference type="Rhea" id="RHEA-COMP:10000"/>
        <dbReference type="Rhea" id="RHEA-COMP:10001"/>
        <dbReference type="ChEBI" id="CHEBI:15377"/>
        <dbReference type="ChEBI" id="CHEBI:15378"/>
        <dbReference type="ChEBI" id="CHEBI:33737"/>
        <dbReference type="ChEBI" id="CHEBI:33738"/>
        <dbReference type="ChEBI" id="CHEBI:57623"/>
        <dbReference type="ChEBI" id="CHEBI:128753"/>
        <dbReference type="EC" id="1.17.7.4"/>
    </reaction>
</comment>
<comment type="cofactor">
    <cofactor evidence="1">
        <name>[4Fe-4S] cluster</name>
        <dbReference type="ChEBI" id="CHEBI:49883"/>
    </cofactor>
    <text evidence="1">Binds 1 [4Fe-4S] cluster per subunit.</text>
</comment>
<comment type="pathway">
    <text evidence="1">Isoprenoid biosynthesis; dimethylallyl diphosphate biosynthesis; dimethylallyl diphosphate from (2E)-4-hydroxy-3-methylbutenyl diphosphate: step 1/1.</text>
</comment>
<comment type="pathway">
    <text evidence="1">Isoprenoid biosynthesis; isopentenyl diphosphate biosynthesis via DXP pathway; isopentenyl diphosphate from 1-deoxy-D-xylulose 5-phosphate: step 6/6.</text>
</comment>
<comment type="similarity">
    <text evidence="1">Belongs to the IspH family.</text>
</comment>
<feature type="chain" id="PRO_0000128785" description="4-hydroxy-3-methylbut-2-enyl diphosphate reductase 2">
    <location>
        <begin position="1"/>
        <end position="308"/>
    </location>
</feature>
<feature type="active site" description="Proton donor" evidence="1">
    <location>
        <position position="126"/>
    </location>
</feature>
<feature type="binding site" evidence="1">
    <location>
        <position position="12"/>
    </location>
    <ligand>
        <name>[4Fe-4S] cluster</name>
        <dbReference type="ChEBI" id="CHEBI:49883"/>
    </ligand>
</feature>
<feature type="binding site" evidence="1">
    <location>
        <position position="41"/>
    </location>
    <ligand>
        <name>(2E)-4-hydroxy-3-methylbut-2-enyl diphosphate</name>
        <dbReference type="ChEBI" id="CHEBI:128753"/>
    </ligand>
</feature>
<feature type="binding site" evidence="1">
    <location>
        <position position="41"/>
    </location>
    <ligand>
        <name>dimethylallyl diphosphate</name>
        <dbReference type="ChEBI" id="CHEBI:57623"/>
    </ligand>
</feature>
<feature type="binding site" evidence="1">
    <location>
        <position position="41"/>
    </location>
    <ligand>
        <name>isopentenyl diphosphate</name>
        <dbReference type="ChEBI" id="CHEBI:128769"/>
    </ligand>
</feature>
<feature type="binding site" evidence="1">
    <location>
        <position position="74"/>
    </location>
    <ligand>
        <name>(2E)-4-hydroxy-3-methylbut-2-enyl diphosphate</name>
        <dbReference type="ChEBI" id="CHEBI:128753"/>
    </ligand>
</feature>
<feature type="binding site" evidence="1">
    <location>
        <position position="74"/>
    </location>
    <ligand>
        <name>dimethylallyl diphosphate</name>
        <dbReference type="ChEBI" id="CHEBI:57623"/>
    </ligand>
</feature>
<feature type="binding site" evidence="1">
    <location>
        <position position="74"/>
    </location>
    <ligand>
        <name>isopentenyl diphosphate</name>
        <dbReference type="ChEBI" id="CHEBI:128769"/>
    </ligand>
</feature>
<feature type="binding site" evidence="1">
    <location>
        <position position="96"/>
    </location>
    <ligand>
        <name>[4Fe-4S] cluster</name>
        <dbReference type="ChEBI" id="CHEBI:49883"/>
    </ligand>
</feature>
<feature type="binding site" evidence="1">
    <location>
        <position position="124"/>
    </location>
    <ligand>
        <name>(2E)-4-hydroxy-3-methylbut-2-enyl diphosphate</name>
        <dbReference type="ChEBI" id="CHEBI:128753"/>
    </ligand>
</feature>
<feature type="binding site" evidence="1">
    <location>
        <position position="124"/>
    </location>
    <ligand>
        <name>dimethylallyl diphosphate</name>
        <dbReference type="ChEBI" id="CHEBI:57623"/>
    </ligand>
</feature>
<feature type="binding site" evidence="1">
    <location>
        <position position="124"/>
    </location>
    <ligand>
        <name>isopentenyl diphosphate</name>
        <dbReference type="ChEBI" id="CHEBI:128769"/>
    </ligand>
</feature>
<feature type="binding site" evidence="1">
    <location>
        <position position="164"/>
    </location>
    <ligand>
        <name>(2E)-4-hydroxy-3-methylbut-2-enyl diphosphate</name>
        <dbReference type="ChEBI" id="CHEBI:128753"/>
    </ligand>
</feature>
<feature type="binding site" evidence="1">
    <location>
        <position position="194"/>
    </location>
    <ligand>
        <name>[4Fe-4S] cluster</name>
        <dbReference type="ChEBI" id="CHEBI:49883"/>
    </ligand>
</feature>
<feature type="binding site" evidence="1">
    <location>
        <position position="222"/>
    </location>
    <ligand>
        <name>(2E)-4-hydroxy-3-methylbut-2-enyl diphosphate</name>
        <dbReference type="ChEBI" id="CHEBI:128753"/>
    </ligand>
</feature>
<feature type="binding site" evidence="1">
    <location>
        <position position="222"/>
    </location>
    <ligand>
        <name>dimethylallyl diphosphate</name>
        <dbReference type="ChEBI" id="CHEBI:57623"/>
    </ligand>
</feature>
<feature type="binding site" evidence="1">
    <location>
        <position position="222"/>
    </location>
    <ligand>
        <name>isopentenyl diphosphate</name>
        <dbReference type="ChEBI" id="CHEBI:128769"/>
    </ligand>
</feature>
<feature type="binding site" evidence="1">
    <location>
        <position position="223"/>
    </location>
    <ligand>
        <name>(2E)-4-hydroxy-3-methylbut-2-enyl diphosphate</name>
        <dbReference type="ChEBI" id="CHEBI:128753"/>
    </ligand>
</feature>
<feature type="binding site" evidence="1">
    <location>
        <position position="223"/>
    </location>
    <ligand>
        <name>dimethylallyl diphosphate</name>
        <dbReference type="ChEBI" id="CHEBI:57623"/>
    </ligand>
</feature>
<feature type="binding site" evidence="1">
    <location>
        <position position="223"/>
    </location>
    <ligand>
        <name>isopentenyl diphosphate</name>
        <dbReference type="ChEBI" id="CHEBI:128769"/>
    </ligand>
</feature>
<feature type="binding site" evidence="1">
    <location>
        <position position="224"/>
    </location>
    <ligand>
        <name>(2E)-4-hydroxy-3-methylbut-2-enyl diphosphate</name>
        <dbReference type="ChEBI" id="CHEBI:128753"/>
    </ligand>
</feature>
<feature type="binding site" evidence="1">
    <location>
        <position position="224"/>
    </location>
    <ligand>
        <name>dimethylallyl diphosphate</name>
        <dbReference type="ChEBI" id="CHEBI:57623"/>
    </ligand>
</feature>
<feature type="binding site" evidence="1">
    <location>
        <position position="224"/>
    </location>
    <ligand>
        <name>isopentenyl diphosphate</name>
        <dbReference type="ChEBI" id="CHEBI:128769"/>
    </ligand>
</feature>
<feature type="binding site" evidence="1">
    <location>
        <position position="266"/>
    </location>
    <ligand>
        <name>(2E)-4-hydroxy-3-methylbut-2-enyl diphosphate</name>
        <dbReference type="ChEBI" id="CHEBI:128753"/>
    </ligand>
</feature>
<feature type="binding site" evidence="1">
    <location>
        <position position="266"/>
    </location>
    <ligand>
        <name>dimethylallyl diphosphate</name>
        <dbReference type="ChEBI" id="CHEBI:57623"/>
    </ligand>
</feature>
<feature type="binding site" evidence="1">
    <location>
        <position position="266"/>
    </location>
    <ligand>
        <name>isopentenyl diphosphate</name>
        <dbReference type="ChEBI" id="CHEBI:128769"/>
    </ligand>
</feature>
<sequence length="308" mass="33269">MEVYLAQPRGFCAGVVRAIEIVERALEKFGPPVYVRHEIVHNKYVVESLKNKGAIFVEELSEVPPKAVTVFSAHGVARSVEEEAAARDLPVLNATCPLVTKVHNQGKRYITKGRTLILIGHAGHPEVEGTMGQVPAPVLLVQSVEEVNALTLPADTPVAYITQTTLSVDDTRDIISALQARFTDIQGPDIRDICYATQNRQSAVRDLSKLVDVILVVGAANSSNSNRLREIGTEAGVASYLIADGSELNPEWLKDARTVGVTAGASAPEVLVDDVIEAMRRIGPVKVQVLPGREENIEFRLPAELAAS</sequence>
<keyword id="KW-0004">4Fe-4S</keyword>
<keyword id="KW-0408">Iron</keyword>
<keyword id="KW-0411">Iron-sulfur</keyword>
<keyword id="KW-0414">Isoprene biosynthesis</keyword>
<keyword id="KW-0479">Metal-binding</keyword>
<keyword id="KW-0560">Oxidoreductase</keyword>
<keyword id="KW-1185">Reference proteome</keyword>
<proteinExistence type="inferred from homology"/>
<dbReference type="EC" id="1.17.7.4" evidence="1"/>
<dbReference type="EMBL" id="BA000040">
    <property type="protein sequence ID" value="BAC48272.1"/>
    <property type="molecule type" value="Genomic_DNA"/>
</dbReference>
<dbReference type="RefSeq" id="NP_769647.1">
    <property type="nucleotide sequence ID" value="NC_004463.1"/>
</dbReference>
<dbReference type="RefSeq" id="WP_011085791.1">
    <property type="nucleotide sequence ID" value="NC_004463.1"/>
</dbReference>
<dbReference type="SMR" id="Q89QW7"/>
<dbReference type="FunCoup" id="Q89QW7">
    <property type="interactions" value="511"/>
</dbReference>
<dbReference type="STRING" id="224911.AAV28_12050"/>
<dbReference type="EnsemblBacteria" id="BAC48272">
    <property type="protein sequence ID" value="BAC48272"/>
    <property type="gene ID" value="BAC48272"/>
</dbReference>
<dbReference type="GeneID" id="46490044"/>
<dbReference type="KEGG" id="bja:bll3007"/>
<dbReference type="PATRIC" id="fig|224911.44.peg.2633"/>
<dbReference type="eggNOG" id="COG0761">
    <property type="taxonomic scope" value="Bacteria"/>
</dbReference>
<dbReference type="HOGENOM" id="CLU_027486_1_1_5"/>
<dbReference type="InParanoid" id="Q89QW7"/>
<dbReference type="OrthoDB" id="9804068at2"/>
<dbReference type="PhylomeDB" id="Q89QW7"/>
<dbReference type="UniPathway" id="UPA00056">
    <property type="reaction ID" value="UER00097"/>
</dbReference>
<dbReference type="UniPathway" id="UPA00059">
    <property type="reaction ID" value="UER00105"/>
</dbReference>
<dbReference type="Proteomes" id="UP000002526">
    <property type="component" value="Chromosome"/>
</dbReference>
<dbReference type="GO" id="GO:0005829">
    <property type="term" value="C:cytosol"/>
    <property type="evidence" value="ECO:0000318"/>
    <property type="project" value="GO_Central"/>
</dbReference>
<dbReference type="GO" id="GO:0051539">
    <property type="term" value="F:4 iron, 4 sulfur cluster binding"/>
    <property type="evidence" value="ECO:0007669"/>
    <property type="project" value="UniProtKB-UniRule"/>
</dbReference>
<dbReference type="GO" id="GO:0051745">
    <property type="term" value="F:4-hydroxy-3-methylbut-2-enyl diphosphate reductase activity"/>
    <property type="evidence" value="ECO:0000318"/>
    <property type="project" value="GO_Central"/>
</dbReference>
<dbReference type="GO" id="GO:0046872">
    <property type="term" value="F:metal ion binding"/>
    <property type="evidence" value="ECO:0007669"/>
    <property type="project" value="UniProtKB-KW"/>
</dbReference>
<dbReference type="GO" id="GO:0050992">
    <property type="term" value="P:dimethylallyl diphosphate biosynthetic process"/>
    <property type="evidence" value="ECO:0007669"/>
    <property type="project" value="UniProtKB-UniRule"/>
</dbReference>
<dbReference type="GO" id="GO:0019288">
    <property type="term" value="P:isopentenyl diphosphate biosynthetic process, methylerythritol 4-phosphate pathway"/>
    <property type="evidence" value="ECO:0000318"/>
    <property type="project" value="GO_Central"/>
</dbReference>
<dbReference type="GO" id="GO:0016114">
    <property type="term" value="P:terpenoid biosynthetic process"/>
    <property type="evidence" value="ECO:0007669"/>
    <property type="project" value="UniProtKB-UniRule"/>
</dbReference>
<dbReference type="CDD" id="cd13944">
    <property type="entry name" value="lytB_ispH"/>
    <property type="match status" value="1"/>
</dbReference>
<dbReference type="Gene3D" id="3.40.50.11270">
    <property type="match status" value="1"/>
</dbReference>
<dbReference type="Gene3D" id="3.40.1010.20">
    <property type="entry name" value="4-hydroxy-3-methylbut-2-enyl diphosphate reductase, catalytic domain"/>
    <property type="match status" value="2"/>
</dbReference>
<dbReference type="HAMAP" id="MF_00191">
    <property type="entry name" value="IspH"/>
    <property type="match status" value="1"/>
</dbReference>
<dbReference type="InterPro" id="IPR003451">
    <property type="entry name" value="LytB/IspH"/>
</dbReference>
<dbReference type="NCBIfam" id="TIGR00216">
    <property type="entry name" value="ispH_lytB"/>
    <property type="match status" value="1"/>
</dbReference>
<dbReference type="NCBIfam" id="NF002188">
    <property type="entry name" value="PRK01045.1-2"/>
    <property type="match status" value="1"/>
</dbReference>
<dbReference type="NCBIfam" id="NF002190">
    <property type="entry name" value="PRK01045.1-4"/>
    <property type="match status" value="1"/>
</dbReference>
<dbReference type="PANTHER" id="PTHR30426">
    <property type="entry name" value="4-HYDROXY-3-METHYLBUT-2-ENYL DIPHOSPHATE REDUCTASE"/>
    <property type="match status" value="1"/>
</dbReference>
<dbReference type="PANTHER" id="PTHR30426:SF0">
    <property type="entry name" value="4-HYDROXY-3-METHYLBUT-2-ENYL DIPHOSPHATE REDUCTASE"/>
    <property type="match status" value="1"/>
</dbReference>
<dbReference type="Pfam" id="PF02401">
    <property type="entry name" value="LYTB"/>
    <property type="match status" value="1"/>
</dbReference>